<gene>
    <name evidence="1" type="primary">mnmA1</name>
    <name type="ordered locus">CBO1185</name>
    <name type="ordered locus">CLC_1228</name>
</gene>
<accession>A5I123</accession>
<accession>A7G2T0</accession>
<comment type="function">
    <text evidence="1">Catalyzes the 2-thiolation of uridine at the wobble position (U34) of tRNA, leading to the formation of s(2)U34.</text>
</comment>
<comment type="catalytic activity">
    <reaction evidence="1">
        <text>S-sulfanyl-L-cysteinyl-[protein] + uridine(34) in tRNA + AH2 + ATP = 2-thiouridine(34) in tRNA + L-cysteinyl-[protein] + A + AMP + diphosphate + H(+)</text>
        <dbReference type="Rhea" id="RHEA:47032"/>
        <dbReference type="Rhea" id="RHEA-COMP:10131"/>
        <dbReference type="Rhea" id="RHEA-COMP:11726"/>
        <dbReference type="Rhea" id="RHEA-COMP:11727"/>
        <dbReference type="Rhea" id="RHEA-COMP:11728"/>
        <dbReference type="ChEBI" id="CHEBI:13193"/>
        <dbReference type="ChEBI" id="CHEBI:15378"/>
        <dbReference type="ChEBI" id="CHEBI:17499"/>
        <dbReference type="ChEBI" id="CHEBI:29950"/>
        <dbReference type="ChEBI" id="CHEBI:30616"/>
        <dbReference type="ChEBI" id="CHEBI:33019"/>
        <dbReference type="ChEBI" id="CHEBI:61963"/>
        <dbReference type="ChEBI" id="CHEBI:65315"/>
        <dbReference type="ChEBI" id="CHEBI:87170"/>
        <dbReference type="ChEBI" id="CHEBI:456215"/>
        <dbReference type="EC" id="2.8.1.13"/>
    </reaction>
</comment>
<comment type="subcellular location">
    <subcellularLocation>
        <location evidence="1">Cytoplasm</location>
    </subcellularLocation>
</comment>
<comment type="similarity">
    <text evidence="1">Belongs to the MnmA/TRMU family.</text>
</comment>
<dbReference type="EC" id="2.8.1.13" evidence="1"/>
<dbReference type="EMBL" id="CP000727">
    <property type="protein sequence ID" value="ABS38188.1"/>
    <property type="molecule type" value="Genomic_DNA"/>
</dbReference>
<dbReference type="EMBL" id="AM412317">
    <property type="protein sequence ID" value="CAL82734.1"/>
    <property type="molecule type" value="Genomic_DNA"/>
</dbReference>
<dbReference type="RefSeq" id="YP_001253710.1">
    <property type="nucleotide sequence ID" value="NC_009495.1"/>
</dbReference>
<dbReference type="RefSeq" id="YP_001387095.1">
    <property type="nucleotide sequence ID" value="NC_009698.1"/>
</dbReference>
<dbReference type="SMR" id="A5I123"/>
<dbReference type="GeneID" id="5185440"/>
<dbReference type="KEGG" id="cbh:CLC_1228"/>
<dbReference type="KEGG" id="cbo:CBO1185"/>
<dbReference type="PATRIC" id="fig|413999.7.peg.1173"/>
<dbReference type="HOGENOM" id="CLU_035188_0_0_9"/>
<dbReference type="PRO" id="PR:A5I123"/>
<dbReference type="Proteomes" id="UP000001986">
    <property type="component" value="Chromosome"/>
</dbReference>
<dbReference type="GO" id="GO:0005737">
    <property type="term" value="C:cytoplasm"/>
    <property type="evidence" value="ECO:0007669"/>
    <property type="project" value="UniProtKB-SubCell"/>
</dbReference>
<dbReference type="GO" id="GO:0005524">
    <property type="term" value="F:ATP binding"/>
    <property type="evidence" value="ECO:0007669"/>
    <property type="project" value="UniProtKB-KW"/>
</dbReference>
<dbReference type="GO" id="GO:0000049">
    <property type="term" value="F:tRNA binding"/>
    <property type="evidence" value="ECO:0007669"/>
    <property type="project" value="UniProtKB-KW"/>
</dbReference>
<dbReference type="GO" id="GO:0103016">
    <property type="term" value="F:tRNA-uridine 2-sulfurtransferase activity"/>
    <property type="evidence" value="ECO:0007669"/>
    <property type="project" value="UniProtKB-EC"/>
</dbReference>
<dbReference type="GO" id="GO:0002143">
    <property type="term" value="P:tRNA wobble position uridine thiolation"/>
    <property type="evidence" value="ECO:0000318"/>
    <property type="project" value="GO_Central"/>
</dbReference>
<dbReference type="CDD" id="cd01998">
    <property type="entry name" value="MnmA_TRMU-like"/>
    <property type="match status" value="1"/>
</dbReference>
<dbReference type="FunFam" id="2.30.30.280:FF:000001">
    <property type="entry name" value="tRNA-specific 2-thiouridylase MnmA"/>
    <property type="match status" value="1"/>
</dbReference>
<dbReference type="FunFam" id="2.40.30.10:FF:000023">
    <property type="entry name" value="tRNA-specific 2-thiouridylase MnmA"/>
    <property type="match status" value="1"/>
</dbReference>
<dbReference type="FunFam" id="3.40.50.620:FF:000115">
    <property type="entry name" value="tRNA-specific 2-thiouridylase MnmA"/>
    <property type="match status" value="1"/>
</dbReference>
<dbReference type="Gene3D" id="2.30.30.280">
    <property type="entry name" value="Adenine nucleotide alpha hydrolases-like domains"/>
    <property type="match status" value="1"/>
</dbReference>
<dbReference type="Gene3D" id="3.40.50.620">
    <property type="entry name" value="HUPs"/>
    <property type="match status" value="1"/>
</dbReference>
<dbReference type="Gene3D" id="2.40.30.10">
    <property type="entry name" value="Translation factors"/>
    <property type="match status" value="1"/>
</dbReference>
<dbReference type="HAMAP" id="MF_00144">
    <property type="entry name" value="tRNA_thiouridyl_MnmA"/>
    <property type="match status" value="1"/>
</dbReference>
<dbReference type="InterPro" id="IPR004506">
    <property type="entry name" value="MnmA-like"/>
</dbReference>
<dbReference type="InterPro" id="IPR046885">
    <property type="entry name" value="MnmA-like_C"/>
</dbReference>
<dbReference type="InterPro" id="IPR046884">
    <property type="entry name" value="MnmA-like_central"/>
</dbReference>
<dbReference type="InterPro" id="IPR023382">
    <property type="entry name" value="MnmA-like_central_sf"/>
</dbReference>
<dbReference type="InterPro" id="IPR014729">
    <property type="entry name" value="Rossmann-like_a/b/a_fold"/>
</dbReference>
<dbReference type="NCBIfam" id="NF001138">
    <property type="entry name" value="PRK00143.1"/>
    <property type="match status" value="1"/>
</dbReference>
<dbReference type="NCBIfam" id="TIGR00420">
    <property type="entry name" value="trmU"/>
    <property type="match status" value="1"/>
</dbReference>
<dbReference type="PANTHER" id="PTHR11933:SF5">
    <property type="entry name" value="MITOCHONDRIAL TRNA-SPECIFIC 2-THIOURIDYLASE 1"/>
    <property type="match status" value="1"/>
</dbReference>
<dbReference type="PANTHER" id="PTHR11933">
    <property type="entry name" value="TRNA 5-METHYLAMINOMETHYL-2-THIOURIDYLATE -METHYLTRANSFERASE"/>
    <property type="match status" value="1"/>
</dbReference>
<dbReference type="Pfam" id="PF03054">
    <property type="entry name" value="tRNA_Me_trans"/>
    <property type="match status" value="1"/>
</dbReference>
<dbReference type="Pfam" id="PF20258">
    <property type="entry name" value="tRNA_Me_trans_C"/>
    <property type="match status" value="1"/>
</dbReference>
<dbReference type="Pfam" id="PF20259">
    <property type="entry name" value="tRNA_Me_trans_M"/>
    <property type="match status" value="1"/>
</dbReference>
<dbReference type="SUPFAM" id="SSF52402">
    <property type="entry name" value="Adenine nucleotide alpha hydrolases-like"/>
    <property type="match status" value="1"/>
</dbReference>
<sequence length="356" mass="40594">MKKKVLVGMSGGVDSSVAAYLLKEQGYEVIGVTMQIWQDDEEFIEKEGGCCSLSAVADARRVANKIGIPFYVMNFKDAFKRNVIDYFVDEYMEGRTPNPCIACNKFIKFSSFLDKAMAIGIDYVATGHYAIIEKHNDRYIIKKSEDDKKDQTYALYNLTQFQLERTLMPCGQYKKSKIREIAKEIGLRVHNKKDSEEICFIPDNDHGRYIKNRFPNKVREGNFVDKQGNILGTHKGIVYYTIGQRKGLGIAFGKPMYVVDINPFRNEVVLGDLEDLLNTKLIAKDTNYIPFDTLKEPMEVEAKIRYSQTPSKAIITPIEDGRVRVNFHEKQRAITKGQSVVFYKDDLLIGGGIIEK</sequence>
<evidence type="ECO:0000255" key="1">
    <source>
        <dbReference type="HAMAP-Rule" id="MF_00144"/>
    </source>
</evidence>
<feature type="chain" id="PRO_0000349588" description="tRNA-specific 2-thiouridylase MnmA 1">
    <location>
        <begin position="1"/>
        <end position="356"/>
    </location>
</feature>
<feature type="region of interest" description="Interaction with tRNA" evidence="1">
    <location>
        <begin position="149"/>
        <end position="151"/>
    </location>
</feature>
<feature type="region of interest" description="Interaction with tRNA" evidence="1">
    <location>
        <begin position="305"/>
        <end position="306"/>
    </location>
</feature>
<feature type="active site" description="Nucleophile" evidence="1">
    <location>
        <position position="103"/>
    </location>
</feature>
<feature type="active site" description="Cysteine persulfide intermediate" evidence="1">
    <location>
        <position position="199"/>
    </location>
</feature>
<feature type="binding site" evidence="1">
    <location>
        <begin position="8"/>
        <end position="15"/>
    </location>
    <ligand>
        <name>ATP</name>
        <dbReference type="ChEBI" id="CHEBI:30616"/>
    </ligand>
</feature>
<feature type="binding site" evidence="1">
    <location>
        <position position="34"/>
    </location>
    <ligand>
        <name>ATP</name>
        <dbReference type="ChEBI" id="CHEBI:30616"/>
    </ligand>
</feature>
<feature type="binding site" evidence="1">
    <location>
        <position position="127"/>
    </location>
    <ligand>
        <name>ATP</name>
        <dbReference type="ChEBI" id="CHEBI:30616"/>
    </ligand>
</feature>
<feature type="site" description="Interaction with tRNA" evidence="1">
    <location>
        <position position="128"/>
    </location>
</feature>
<feature type="site" description="Interaction with tRNA" evidence="1">
    <location>
        <position position="338"/>
    </location>
</feature>
<feature type="disulfide bond" description="Alternate" evidence="1">
    <location>
        <begin position="103"/>
        <end position="199"/>
    </location>
</feature>
<keyword id="KW-0067">ATP-binding</keyword>
<keyword id="KW-0963">Cytoplasm</keyword>
<keyword id="KW-1015">Disulfide bond</keyword>
<keyword id="KW-0547">Nucleotide-binding</keyword>
<keyword id="KW-1185">Reference proteome</keyword>
<keyword id="KW-0694">RNA-binding</keyword>
<keyword id="KW-0808">Transferase</keyword>
<keyword id="KW-0819">tRNA processing</keyword>
<keyword id="KW-0820">tRNA-binding</keyword>
<name>MNMA1_CLOBH</name>
<reference key="1">
    <citation type="journal article" date="2007" name="Genome Res.">
        <title>Genome sequence of a proteolytic (Group I) Clostridium botulinum strain Hall A and comparative analysis of the clostridial genomes.</title>
        <authorList>
            <person name="Sebaihia M."/>
            <person name="Peck M.W."/>
            <person name="Minton N.P."/>
            <person name="Thomson N.R."/>
            <person name="Holden M.T.G."/>
            <person name="Mitchell W.J."/>
            <person name="Carter A.T."/>
            <person name="Bentley S.D."/>
            <person name="Mason D.R."/>
            <person name="Crossman L."/>
            <person name="Paul C.J."/>
            <person name="Ivens A."/>
            <person name="Wells-Bennik M.H.J."/>
            <person name="Davis I.J."/>
            <person name="Cerdeno-Tarraga A.M."/>
            <person name="Churcher C."/>
            <person name="Quail M.A."/>
            <person name="Chillingworth T."/>
            <person name="Feltwell T."/>
            <person name="Fraser A."/>
            <person name="Goodhead I."/>
            <person name="Hance Z."/>
            <person name="Jagels K."/>
            <person name="Larke N."/>
            <person name="Maddison M."/>
            <person name="Moule S."/>
            <person name="Mungall K."/>
            <person name="Norbertczak H."/>
            <person name="Rabbinowitsch E."/>
            <person name="Sanders M."/>
            <person name="Simmonds M."/>
            <person name="White B."/>
            <person name="Whithead S."/>
            <person name="Parkhill J."/>
        </authorList>
    </citation>
    <scope>NUCLEOTIDE SEQUENCE [LARGE SCALE GENOMIC DNA]</scope>
    <source>
        <strain>Hall / ATCC 3502 / NCTC 13319 / Type A</strain>
    </source>
</reference>
<reference key="2">
    <citation type="journal article" date="2007" name="PLoS ONE">
        <title>Analysis of the neurotoxin complex genes in Clostridium botulinum A1-A4 and B1 strains: BoNT/A3, /Ba4 and /B1 clusters are located within plasmids.</title>
        <authorList>
            <person name="Smith T.J."/>
            <person name="Hill K.K."/>
            <person name="Foley B.T."/>
            <person name="Detter J.C."/>
            <person name="Munk A.C."/>
            <person name="Bruce D.C."/>
            <person name="Doggett N.A."/>
            <person name="Smith L.A."/>
            <person name="Marks J.D."/>
            <person name="Xie G."/>
            <person name="Brettin T.S."/>
        </authorList>
    </citation>
    <scope>NUCLEOTIDE SEQUENCE [LARGE SCALE GENOMIC DNA]</scope>
    <source>
        <strain>Hall / ATCC 3502 / NCTC 13319 / Type A</strain>
    </source>
</reference>
<protein>
    <recommendedName>
        <fullName evidence="1">tRNA-specific 2-thiouridylase MnmA 1</fullName>
        <ecNumber evidence="1">2.8.1.13</ecNumber>
    </recommendedName>
</protein>
<proteinExistence type="inferred from homology"/>
<organism>
    <name type="scientific">Clostridium botulinum (strain Hall / ATCC 3502 / NCTC 13319 / Type A)</name>
    <dbReference type="NCBI Taxonomy" id="441771"/>
    <lineage>
        <taxon>Bacteria</taxon>
        <taxon>Bacillati</taxon>
        <taxon>Bacillota</taxon>
        <taxon>Clostridia</taxon>
        <taxon>Eubacteriales</taxon>
        <taxon>Clostridiaceae</taxon>
        <taxon>Clostridium</taxon>
    </lineage>
</organism>